<reference key="1">
    <citation type="submission" date="2008-05" db="EMBL/GenBank/DDBJ databases">
        <title>Genome sequence of Helicobacter pylori from the remote Amazon: traces of Asian ancestry of the first Americans.</title>
        <authorList>
            <person name="Kersulyte D."/>
            <person name="Kalia A."/>
            <person name="Gilman R.H."/>
            <person name="Berg D.E."/>
        </authorList>
    </citation>
    <scope>NUCLEOTIDE SEQUENCE [LARGE SCALE GENOMIC DNA]</scope>
    <source>
        <strain>Shi470</strain>
    </source>
</reference>
<comment type="function">
    <text evidence="1">Catalyzes the conversion of (8S)-3',8-cyclo-7,8-dihydroguanosine 5'-triphosphate to cyclic pyranopterin monophosphate (cPMP).</text>
</comment>
<comment type="catalytic activity">
    <reaction evidence="1">
        <text>(8S)-3',8-cyclo-7,8-dihydroguanosine 5'-triphosphate = cyclic pyranopterin phosphate + diphosphate</text>
        <dbReference type="Rhea" id="RHEA:49580"/>
        <dbReference type="ChEBI" id="CHEBI:33019"/>
        <dbReference type="ChEBI" id="CHEBI:59648"/>
        <dbReference type="ChEBI" id="CHEBI:131766"/>
        <dbReference type="EC" id="4.6.1.17"/>
    </reaction>
</comment>
<comment type="pathway">
    <text evidence="1">Cofactor biosynthesis; molybdopterin biosynthesis.</text>
</comment>
<comment type="subunit">
    <text evidence="1">Homohexamer; trimer of dimers.</text>
</comment>
<comment type="similarity">
    <text evidence="1">Belongs to the MoaC family.</text>
</comment>
<proteinExistence type="inferred from homology"/>
<feature type="chain" id="PRO_1000139275" description="Cyclic pyranopterin monophosphate synthase">
    <location>
        <begin position="1"/>
        <end position="158"/>
    </location>
</feature>
<feature type="active site" evidence="1">
    <location>
        <position position="127"/>
    </location>
</feature>
<feature type="binding site" evidence="1">
    <location>
        <begin position="74"/>
        <end position="76"/>
    </location>
    <ligand>
        <name>substrate</name>
    </ligand>
</feature>
<feature type="binding site" evidence="1">
    <location>
        <begin position="112"/>
        <end position="113"/>
    </location>
    <ligand>
        <name>substrate</name>
    </ligand>
</feature>
<evidence type="ECO:0000255" key="1">
    <source>
        <dbReference type="HAMAP-Rule" id="MF_01224"/>
    </source>
</evidence>
<name>MOAC_HELPS</name>
<keyword id="KW-0456">Lyase</keyword>
<keyword id="KW-0501">Molybdenum cofactor biosynthesis</keyword>
<dbReference type="EC" id="4.6.1.17" evidence="1"/>
<dbReference type="EMBL" id="CP001072">
    <property type="protein sequence ID" value="ACD48015.1"/>
    <property type="molecule type" value="Genomic_DNA"/>
</dbReference>
<dbReference type="RefSeq" id="WP_001131556.1">
    <property type="nucleotide sequence ID" value="NC_010698.2"/>
</dbReference>
<dbReference type="SMR" id="B2UT33"/>
<dbReference type="KEGG" id="hps:HPSH_02825"/>
<dbReference type="HOGENOM" id="CLU_074693_1_1_7"/>
<dbReference type="UniPathway" id="UPA00344"/>
<dbReference type="GO" id="GO:0061799">
    <property type="term" value="F:cyclic pyranopterin monophosphate synthase activity"/>
    <property type="evidence" value="ECO:0007669"/>
    <property type="project" value="UniProtKB-UniRule"/>
</dbReference>
<dbReference type="GO" id="GO:0061798">
    <property type="term" value="F:GTP 3',8'-cyclase activity"/>
    <property type="evidence" value="ECO:0007669"/>
    <property type="project" value="TreeGrafter"/>
</dbReference>
<dbReference type="GO" id="GO:0006777">
    <property type="term" value="P:Mo-molybdopterin cofactor biosynthetic process"/>
    <property type="evidence" value="ECO:0007669"/>
    <property type="project" value="UniProtKB-UniRule"/>
</dbReference>
<dbReference type="CDD" id="cd01420">
    <property type="entry name" value="MoaC_PE"/>
    <property type="match status" value="1"/>
</dbReference>
<dbReference type="Gene3D" id="3.30.70.640">
    <property type="entry name" value="Molybdopterin cofactor biosynthesis C (MoaC) domain"/>
    <property type="match status" value="1"/>
</dbReference>
<dbReference type="HAMAP" id="MF_01224_B">
    <property type="entry name" value="MoaC_B"/>
    <property type="match status" value="1"/>
</dbReference>
<dbReference type="InterPro" id="IPR023045">
    <property type="entry name" value="MoaC"/>
</dbReference>
<dbReference type="InterPro" id="IPR047594">
    <property type="entry name" value="MoaC_bact/euk"/>
</dbReference>
<dbReference type="InterPro" id="IPR036522">
    <property type="entry name" value="MoaC_sf"/>
</dbReference>
<dbReference type="InterPro" id="IPR050105">
    <property type="entry name" value="MoCo_biosynth_MoaA/MoaC"/>
</dbReference>
<dbReference type="InterPro" id="IPR002820">
    <property type="entry name" value="Mopterin_CF_biosynth-C_dom"/>
</dbReference>
<dbReference type="NCBIfam" id="TIGR00581">
    <property type="entry name" value="moaC"/>
    <property type="match status" value="1"/>
</dbReference>
<dbReference type="NCBIfam" id="NF006870">
    <property type="entry name" value="PRK09364.1"/>
    <property type="match status" value="1"/>
</dbReference>
<dbReference type="PANTHER" id="PTHR22960:SF0">
    <property type="entry name" value="MOLYBDENUM COFACTOR BIOSYNTHESIS PROTEIN 1"/>
    <property type="match status" value="1"/>
</dbReference>
<dbReference type="PANTHER" id="PTHR22960">
    <property type="entry name" value="MOLYBDOPTERIN COFACTOR SYNTHESIS PROTEIN A"/>
    <property type="match status" value="1"/>
</dbReference>
<dbReference type="Pfam" id="PF01967">
    <property type="entry name" value="MoaC"/>
    <property type="match status" value="1"/>
</dbReference>
<dbReference type="SUPFAM" id="SSF55040">
    <property type="entry name" value="Molybdenum cofactor biosynthesis protein C, MoaC"/>
    <property type="match status" value="1"/>
</dbReference>
<sequence>MPLTHLNEENQPKMVDIGDKETTERIALASGRISMNKEAYDAIVNHCVKKGPVLQTAIIAGIMGAKKTSELIPMCHSIMLNGVDIDILEEKETHSFKLYARVKTQAKTGVEMEALMSVSIGLLTIYDMVKAIDKSMTISGVMLEHKSGGKSGDYNAKK</sequence>
<gene>
    <name evidence="1" type="primary">moaC</name>
    <name type="ordered locus">HPSH_02825</name>
</gene>
<accession>B2UT33</accession>
<protein>
    <recommendedName>
        <fullName evidence="1">Cyclic pyranopterin monophosphate synthase</fullName>
        <ecNumber evidence="1">4.6.1.17</ecNumber>
    </recommendedName>
    <alternativeName>
        <fullName evidence="1">Molybdenum cofactor biosynthesis protein C</fullName>
    </alternativeName>
</protein>
<organism>
    <name type="scientific">Helicobacter pylori (strain Shi470)</name>
    <dbReference type="NCBI Taxonomy" id="512562"/>
    <lineage>
        <taxon>Bacteria</taxon>
        <taxon>Pseudomonadati</taxon>
        <taxon>Campylobacterota</taxon>
        <taxon>Epsilonproteobacteria</taxon>
        <taxon>Campylobacterales</taxon>
        <taxon>Helicobacteraceae</taxon>
        <taxon>Helicobacter</taxon>
    </lineage>
</organism>